<comment type="function">
    <text evidence="2 5">Actin is a highly conserved protein that polymerizes to produce filaments that form cross-linked networks in the cytoplasm of cells (By similarity). Actin exists in both monomeric (G-actin) and polymeric (F-actin) forms, both forms playing key functions, such as cell motility and contraction (By similarity). In addition to their role in the cytoplasmic cytoskeleton, G- and F-actin also localize in the nucleus, and regulate gene transcription and motility and repair of damaged DNA (By similarity). Plays a role in the assembly of the gamma-tubulin ring complex (gTuRC), which regulates the minus-end nucleation of alpha-beta tubulin heterodimers that grow into microtubule protafilaments (By similarity). Part of the ACTR1A/ACTB filament around which the dynactin complex is built (By similarity). The dynactin multiprotein complex activates the molecular motor dynein for ultra-processive transport along microtubules (By similarity).</text>
</comment>
<comment type="catalytic activity">
    <reaction evidence="4">
        <text>ATP + H2O = ADP + phosphate + H(+)</text>
        <dbReference type="Rhea" id="RHEA:13065"/>
        <dbReference type="ChEBI" id="CHEBI:15377"/>
        <dbReference type="ChEBI" id="CHEBI:15378"/>
        <dbReference type="ChEBI" id="CHEBI:30616"/>
        <dbReference type="ChEBI" id="CHEBI:43474"/>
        <dbReference type="ChEBI" id="CHEBI:456216"/>
    </reaction>
</comment>
<comment type="subunit">
    <text evidence="1 2 3 5">Polymerization of globular actin (G-actin) leads to a structural filament (F-actin) in the form of a two-stranded helix (By similarity). Each actin can bind to 4 others (By similarity). Identified in a IGF2BP1-dependent mRNP granule complex containing untranslated mRNAs (By similarity). Component of the BAF complex, which includes at least actin (ACTB), ARID1A, ARID1B/BAF250, SMARCA2, SMARCA4/BRG1, ACTL6A/BAF53, ACTL6B/BAF53B, SMARCE1/BAF57 SMARCC1/BAF155, SMARCC2/BAF170, SMARCB1/SNF5/INI1, and one or more of SMARCD1/BAF60A, SMARCD2/BAF60B, or SMARCD3/BAF60C (By similarity). In muscle cells, the BAF complex also contains DPF3 (By similarity). Found in a complex with XPO6, Ran, ACTB and PFN1 (By similarity). Interacts with PFN1 (By similarity). Interacts with XPO6 and EMD (By similarity). Interacts with ERBB2 (By similarity). Interacts with GCSAM (By similarity). Interacts with TBC1D21 (By similarity). Interacts with CPNE1 (via VWFA domain) and CPNE4 (via VWFA domain) (By similarity). Interacts with DHX9 (via C-terminus); this interaction is direct and mediates the attachment to nuclear ribonucleoprotein complexes (By similarity). Interacts with FAM107A (By similarity). Associates with the gamma-tubulin ring complex (gTuRC) consisting of TUBGCP2, TUBGCP3, TUBGCP4, TUBGCP5 and TUBGCP6 and gamma-tubulin TUBG1 or TUBG2; within the complex, interacts with TUBGCP3 and TUBGCP6 to form a luminal bridge with MZT1 that stabilizes the initial structure during complex assembly (By similarity). Part of the ACTR1A/ACTB filament around which the dynactin complex is built (By similarity). The filament contains 8 copies of ACTR1A and 1 ACTB (By similarity). Interacts with TPRN which forms ring-like structures in the stereocilium taper region; the interaction may stabilize stereocilia in inner ear hair cells (By similarity). Interacts with AMOTL2 (via N-terminus), the interaction facilitates binding of cell junction complexes to actin fibers in endothelial cells (By similarity).</text>
</comment>
<comment type="subcellular location">
    <subcellularLocation>
        <location evidence="2">Cytoplasm</location>
        <location evidence="2">Cytoskeleton</location>
    </subcellularLocation>
    <subcellularLocation>
        <location evidence="2">Nucleus</location>
    </subcellularLocation>
    <text evidence="2">Localized in cytoplasmic mRNP granules containing untranslated mRNAs.</text>
</comment>
<comment type="PTM">
    <molecule>Actin, cytoplasmic 1</molecule>
    <text evidence="2">N-terminal cleavage of acetylated methionine of immature cytoplasmic actin by ACTMAP.</text>
</comment>
<comment type="PTM">
    <text evidence="2">ISGylated.</text>
</comment>
<comment type="PTM">
    <text evidence="3">Oxidation of Met-44 and Met-47 by MICALs (MICAL1, MICAL2 or MICAL3) to form methionine sulfoxide promotes actin filament depolymerization. MICAL1 and MICAL2 produce the (R)-S-oxide form. The (R)-S-oxide form is reverted by MSRB1 and MSRB2, which promote actin repolymerization.</text>
</comment>
<comment type="PTM">
    <text evidence="2">Monomethylation at Lys-84 (K84me1) regulates actin-myosin interaction and actomyosin-dependent processes. Demethylation by ALKBH4 is required for maintaining actomyosin dynamics supporting normal cleavage furrow ingression during cytokinesis and cell migration.</text>
</comment>
<comment type="PTM">
    <molecule>Actin, cytoplasmic 1, N-terminally processed</molecule>
    <text evidence="2">N-terminal acetylation by NAA80 affects actin filament depolymerization and elongation, including elongation driven by formins. In contrast, filament nucleation by the Arp2/3 complex is not affected.</text>
</comment>
<comment type="PTM">
    <text evidence="2 3">Methylated at His-73 by SETD3 (By similarity). Methylation at His-73 is required for smooth muscle contraction of the laboring uterus during delivery (By similarity).</text>
</comment>
<comment type="miscellaneous">
    <text evidence="2">In vertebrates 3 main groups of actin isoforms, alpha, beta and gamma have been identified. The alpha actins are found in muscle tissues and are a major constituent of the contractile apparatus. The beta and gamma actins coexist in most cell types as components of the cytoskeleton and as mediators of internal cell motility.</text>
</comment>
<comment type="similarity">
    <text evidence="6">Belongs to the actin family.</text>
</comment>
<reference key="1">
    <citation type="submission" date="1997-12" db="EMBL/GenBank/DDBJ databases">
        <title>Equine beta actin.</title>
        <authorList>
            <person name="Swiderski C.E."/>
            <person name="Horohov D.W."/>
        </authorList>
    </citation>
    <scope>NUCLEOTIDE SEQUENCE [MRNA]</scope>
</reference>
<keyword id="KW-0007">Acetylation</keyword>
<keyword id="KW-0067">ATP-binding</keyword>
<keyword id="KW-0963">Cytoplasm</keyword>
<keyword id="KW-0206">Cytoskeleton</keyword>
<keyword id="KW-0378">Hydrolase</keyword>
<keyword id="KW-0488">Methylation</keyword>
<keyword id="KW-0547">Nucleotide-binding</keyword>
<keyword id="KW-0539">Nucleus</keyword>
<keyword id="KW-0558">Oxidation</keyword>
<keyword id="KW-1185">Reference proteome</keyword>
<keyword id="KW-0832">Ubl conjugation</keyword>
<evidence type="ECO:0000250" key="1">
    <source>
        <dbReference type="UniProtKB" id="O18840"/>
    </source>
</evidence>
<evidence type="ECO:0000250" key="2">
    <source>
        <dbReference type="UniProtKB" id="P60709"/>
    </source>
</evidence>
<evidence type="ECO:0000250" key="3">
    <source>
        <dbReference type="UniProtKB" id="P60710"/>
    </source>
</evidence>
<evidence type="ECO:0000250" key="4">
    <source>
        <dbReference type="UniProtKB" id="P68137"/>
    </source>
</evidence>
<evidence type="ECO:0000250" key="5">
    <source>
        <dbReference type="UniProtKB" id="Q6QAQ1"/>
    </source>
</evidence>
<evidence type="ECO:0000305" key="6"/>
<name>ACTB_HORSE</name>
<gene>
    <name type="primary">ACTB</name>
</gene>
<protein>
    <recommendedName>
        <fullName>Actin, cytoplasmic 1</fullName>
        <ecNumber evidence="4">3.6.4.-</ecNumber>
    </recommendedName>
    <alternativeName>
        <fullName>Beta-actin</fullName>
    </alternativeName>
    <component>
        <recommendedName>
            <fullName>Actin, cytoplasmic 1, N-terminally processed</fullName>
        </recommendedName>
    </component>
</protein>
<accession>P60708</accession>
<accession>P02570</accession>
<accession>P70514</accession>
<accession>P99021</accession>
<accession>Q11211</accession>
<accession>Q64316</accession>
<sequence length="375" mass="41737">MDDDIAALVVDNGSGMCKAGFAGDDAPRAVFPSIVGRPRHQGVMVGMGQKDSYVGDEAQSKRGILTLKYPIEHGIVTNWDDMEKIWHHTFYNELRVAPEEHPVLLTEAPLNPKANREKMTQIMFETFNTPAMYVAIQAVLSLYASGRTTGIVMDSGDGVTHTVPIYEGYALPHAILRLDLAGRDLTDYLMKILTERGYSFTTTAEREIVRDIKEKLCYVALDFEQEMATAASSSSLEKSYELPDGQVITIGNERFRCPEALFQPSFLGMESCGIHETTFNSIMKCDVDIRKDLYANTVLSGGTTMYPGIADRMQKEITALAPSTMKIKIIAPPERKYSVWIGGSILASLSTFQQMWISKQEYDESGPSIVHRKCF</sequence>
<organism>
    <name type="scientific">Equus caballus</name>
    <name type="common">Horse</name>
    <dbReference type="NCBI Taxonomy" id="9796"/>
    <lineage>
        <taxon>Eukaryota</taxon>
        <taxon>Metazoa</taxon>
        <taxon>Chordata</taxon>
        <taxon>Craniata</taxon>
        <taxon>Vertebrata</taxon>
        <taxon>Euteleostomi</taxon>
        <taxon>Mammalia</taxon>
        <taxon>Eutheria</taxon>
        <taxon>Laurasiatheria</taxon>
        <taxon>Perissodactyla</taxon>
        <taxon>Equidae</taxon>
        <taxon>Equus</taxon>
    </lineage>
</organism>
<feature type="chain" id="PRO_0000000769" description="Actin, cytoplasmic 1">
    <location>
        <begin position="1"/>
        <end position="375"/>
    </location>
</feature>
<feature type="initiator methionine" description="Removed; alternate" evidence="2">
    <location>
        <position position="1"/>
    </location>
</feature>
<feature type="chain" id="PRO_0000367072" description="Actin, cytoplasmic 1, N-terminally processed">
    <location>
        <begin position="2"/>
        <end position="375"/>
    </location>
</feature>
<feature type="modified residue" description="N-acetylmethionine" evidence="2">
    <location>
        <position position="1"/>
    </location>
</feature>
<feature type="modified residue" description="N-acetylaspartate; in Actin, cytoplasmic 1, N-terminally processed" evidence="2">
    <location>
        <position position="2"/>
    </location>
</feature>
<feature type="modified residue" description="Methionine (R)-sulfoxide" evidence="3">
    <location>
        <position position="44"/>
    </location>
</feature>
<feature type="modified residue" description="Methionine (R)-sulfoxide" evidence="3">
    <location>
        <position position="47"/>
    </location>
</feature>
<feature type="modified residue" description="Tele-methylhistidine" evidence="3">
    <location>
        <position position="73"/>
    </location>
</feature>
<feature type="modified residue" description="N6-methyllysine" evidence="2">
    <location>
        <position position="84"/>
    </location>
</feature>
<dbReference type="EC" id="3.6.4.-" evidence="4"/>
<dbReference type="EMBL" id="AF035774">
    <property type="protein sequence ID" value="AAB88212.1"/>
    <property type="molecule type" value="mRNA"/>
</dbReference>
<dbReference type="RefSeq" id="NP_001075307.1">
    <property type="nucleotide sequence ID" value="NM_001081838.1"/>
</dbReference>
<dbReference type="SMR" id="P60708"/>
<dbReference type="FunCoup" id="P60708">
    <property type="interactions" value="2493"/>
</dbReference>
<dbReference type="STRING" id="9796.ENSECAP00000013637"/>
<dbReference type="PaxDb" id="9796-ENSECAP00000013637"/>
<dbReference type="PeptideAtlas" id="P60708"/>
<dbReference type="GeneID" id="100033878"/>
<dbReference type="KEGG" id="ecb:100033878"/>
<dbReference type="CTD" id="60"/>
<dbReference type="InParanoid" id="P60708"/>
<dbReference type="OrthoDB" id="9816604at2759"/>
<dbReference type="Proteomes" id="UP000002281">
    <property type="component" value="Unplaced"/>
</dbReference>
<dbReference type="GO" id="GO:0015629">
    <property type="term" value="C:actin cytoskeleton"/>
    <property type="evidence" value="ECO:0000250"/>
    <property type="project" value="UniProtKB"/>
</dbReference>
<dbReference type="GO" id="GO:0005884">
    <property type="term" value="C:actin filament"/>
    <property type="evidence" value="ECO:0000318"/>
    <property type="project" value="GO_Central"/>
</dbReference>
<dbReference type="GO" id="GO:0030424">
    <property type="term" value="C:axon"/>
    <property type="evidence" value="ECO:0000318"/>
    <property type="project" value="GO_Central"/>
</dbReference>
<dbReference type="GO" id="GO:0005737">
    <property type="term" value="C:cytoplasm"/>
    <property type="evidence" value="ECO:0000318"/>
    <property type="project" value="GO_Central"/>
</dbReference>
<dbReference type="GO" id="GO:0005856">
    <property type="term" value="C:cytoskeleton"/>
    <property type="evidence" value="ECO:0000250"/>
    <property type="project" value="AgBase"/>
</dbReference>
<dbReference type="GO" id="GO:0097433">
    <property type="term" value="C:dense body"/>
    <property type="evidence" value="ECO:0000250"/>
    <property type="project" value="AgBase"/>
</dbReference>
<dbReference type="GO" id="GO:0005925">
    <property type="term" value="C:focal adhesion"/>
    <property type="evidence" value="ECO:0000250"/>
    <property type="project" value="AgBase"/>
</dbReference>
<dbReference type="GO" id="GO:0016020">
    <property type="term" value="C:membrane"/>
    <property type="evidence" value="ECO:0000318"/>
    <property type="project" value="GO_Central"/>
</dbReference>
<dbReference type="GO" id="GO:0035267">
    <property type="term" value="C:NuA4 histone acetyltransferase complex"/>
    <property type="evidence" value="ECO:0000318"/>
    <property type="project" value="GO_Central"/>
</dbReference>
<dbReference type="GO" id="GO:0005634">
    <property type="term" value="C:nucleus"/>
    <property type="evidence" value="ECO:0000250"/>
    <property type="project" value="UniProtKB"/>
</dbReference>
<dbReference type="GO" id="GO:0005886">
    <property type="term" value="C:plasma membrane"/>
    <property type="evidence" value="ECO:0000250"/>
    <property type="project" value="AgBase"/>
</dbReference>
<dbReference type="GO" id="GO:0032991">
    <property type="term" value="C:protein-containing complex"/>
    <property type="evidence" value="ECO:0000250"/>
    <property type="project" value="UniProtKB"/>
</dbReference>
<dbReference type="GO" id="GO:0045202">
    <property type="term" value="C:synapse"/>
    <property type="evidence" value="ECO:0000318"/>
    <property type="project" value="GO_Central"/>
</dbReference>
<dbReference type="GO" id="GO:0005524">
    <property type="term" value="F:ATP binding"/>
    <property type="evidence" value="ECO:0007669"/>
    <property type="project" value="UniProtKB-KW"/>
</dbReference>
<dbReference type="GO" id="GO:0016787">
    <property type="term" value="F:hydrolase activity"/>
    <property type="evidence" value="ECO:0007669"/>
    <property type="project" value="UniProtKB-KW"/>
</dbReference>
<dbReference type="GO" id="GO:0019901">
    <property type="term" value="F:protein kinase binding"/>
    <property type="evidence" value="ECO:0000318"/>
    <property type="project" value="GO_Central"/>
</dbReference>
<dbReference type="GO" id="GO:0098973">
    <property type="term" value="F:structural constituent of postsynaptic actin cytoskeleton"/>
    <property type="evidence" value="ECO:0000318"/>
    <property type="project" value="GO_Central"/>
</dbReference>
<dbReference type="GO" id="GO:0007409">
    <property type="term" value="P:axonogenesis"/>
    <property type="evidence" value="ECO:0000318"/>
    <property type="project" value="GO_Central"/>
</dbReference>
<dbReference type="GO" id="GO:0048870">
    <property type="term" value="P:cell motility"/>
    <property type="evidence" value="ECO:0000318"/>
    <property type="project" value="GO_Central"/>
</dbReference>
<dbReference type="CDD" id="cd10224">
    <property type="entry name" value="ASKHA_NBD_actin"/>
    <property type="match status" value="1"/>
</dbReference>
<dbReference type="FunFam" id="3.30.420.40:FF:000131">
    <property type="entry name" value="Actin, alpha skeletal muscle"/>
    <property type="match status" value="1"/>
</dbReference>
<dbReference type="FunFam" id="3.30.420.40:FF:000291">
    <property type="entry name" value="Actin, alpha skeletal muscle"/>
    <property type="match status" value="1"/>
</dbReference>
<dbReference type="FunFam" id="3.90.640.10:FF:000047">
    <property type="entry name" value="Actin, alpha skeletal muscle"/>
    <property type="match status" value="1"/>
</dbReference>
<dbReference type="FunFam" id="3.30.420.40:FF:000058">
    <property type="entry name" value="Putative actin-related protein 5"/>
    <property type="match status" value="1"/>
</dbReference>
<dbReference type="Gene3D" id="3.30.420.40">
    <property type="match status" value="2"/>
</dbReference>
<dbReference type="Gene3D" id="3.90.640.10">
    <property type="entry name" value="Actin, Chain A, domain 4"/>
    <property type="match status" value="1"/>
</dbReference>
<dbReference type="InterPro" id="IPR004000">
    <property type="entry name" value="Actin"/>
</dbReference>
<dbReference type="InterPro" id="IPR020902">
    <property type="entry name" value="Actin/actin-like_CS"/>
</dbReference>
<dbReference type="InterPro" id="IPR004001">
    <property type="entry name" value="Actin_CS"/>
</dbReference>
<dbReference type="InterPro" id="IPR043129">
    <property type="entry name" value="ATPase_NBD"/>
</dbReference>
<dbReference type="PANTHER" id="PTHR11937">
    <property type="entry name" value="ACTIN"/>
    <property type="match status" value="1"/>
</dbReference>
<dbReference type="Pfam" id="PF00022">
    <property type="entry name" value="Actin"/>
    <property type="match status" value="1"/>
</dbReference>
<dbReference type="PRINTS" id="PR00190">
    <property type="entry name" value="ACTIN"/>
</dbReference>
<dbReference type="SMART" id="SM00268">
    <property type="entry name" value="ACTIN"/>
    <property type="match status" value="1"/>
</dbReference>
<dbReference type="SUPFAM" id="SSF53067">
    <property type="entry name" value="Actin-like ATPase domain"/>
    <property type="match status" value="2"/>
</dbReference>
<dbReference type="PROSITE" id="PS00406">
    <property type="entry name" value="ACTINS_1"/>
    <property type="match status" value="1"/>
</dbReference>
<dbReference type="PROSITE" id="PS00432">
    <property type="entry name" value="ACTINS_2"/>
    <property type="match status" value="1"/>
</dbReference>
<dbReference type="PROSITE" id="PS01132">
    <property type="entry name" value="ACTINS_ACT_LIKE"/>
    <property type="match status" value="1"/>
</dbReference>
<proteinExistence type="evidence at transcript level"/>